<organism>
    <name type="scientific">Janthinobacterium sp. (strain Marseille)</name>
    <name type="common">Minibacterium massiliensis</name>
    <dbReference type="NCBI Taxonomy" id="375286"/>
    <lineage>
        <taxon>Bacteria</taxon>
        <taxon>Pseudomonadati</taxon>
        <taxon>Pseudomonadota</taxon>
        <taxon>Betaproteobacteria</taxon>
        <taxon>Burkholderiales</taxon>
        <taxon>Oxalobacteraceae</taxon>
        <taxon>Janthinobacterium</taxon>
    </lineage>
</organism>
<protein>
    <recommendedName>
        <fullName evidence="1">Large ribosomal subunit protein uL15</fullName>
    </recommendedName>
    <alternativeName>
        <fullName evidence="3">50S ribosomal protein L15</fullName>
    </alternativeName>
</protein>
<proteinExistence type="inferred from homology"/>
<feature type="chain" id="PRO_1000054476" description="Large ribosomal subunit protein uL15">
    <location>
        <begin position="1"/>
        <end position="143"/>
    </location>
</feature>
<feature type="region of interest" description="Disordered" evidence="2">
    <location>
        <begin position="1"/>
        <end position="52"/>
    </location>
</feature>
<feature type="compositionally biased region" description="Gly residues" evidence="2">
    <location>
        <begin position="21"/>
        <end position="31"/>
    </location>
</feature>
<dbReference type="EMBL" id="CP000269">
    <property type="protein sequence ID" value="ABR88906.1"/>
    <property type="molecule type" value="Genomic_DNA"/>
</dbReference>
<dbReference type="RefSeq" id="WP_012081233.1">
    <property type="nucleotide sequence ID" value="NC_009659.1"/>
</dbReference>
<dbReference type="SMR" id="A6T3I5"/>
<dbReference type="STRING" id="375286.mma_3392"/>
<dbReference type="KEGG" id="mms:mma_3392"/>
<dbReference type="eggNOG" id="COG0200">
    <property type="taxonomic scope" value="Bacteria"/>
</dbReference>
<dbReference type="HOGENOM" id="CLU_055188_4_2_4"/>
<dbReference type="OrthoDB" id="9810293at2"/>
<dbReference type="Proteomes" id="UP000006388">
    <property type="component" value="Chromosome"/>
</dbReference>
<dbReference type="GO" id="GO:0022625">
    <property type="term" value="C:cytosolic large ribosomal subunit"/>
    <property type="evidence" value="ECO:0007669"/>
    <property type="project" value="TreeGrafter"/>
</dbReference>
<dbReference type="GO" id="GO:0019843">
    <property type="term" value="F:rRNA binding"/>
    <property type="evidence" value="ECO:0007669"/>
    <property type="project" value="UniProtKB-UniRule"/>
</dbReference>
<dbReference type="GO" id="GO:0003735">
    <property type="term" value="F:structural constituent of ribosome"/>
    <property type="evidence" value="ECO:0007669"/>
    <property type="project" value="InterPro"/>
</dbReference>
<dbReference type="GO" id="GO:0006412">
    <property type="term" value="P:translation"/>
    <property type="evidence" value="ECO:0007669"/>
    <property type="project" value="UniProtKB-UniRule"/>
</dbReference>
<dbReference type="Gene3D" id="3.100.10.10">
    <property type="match status" value="1"/>
</dbReference>
<dbReference type="HAMAP" id="MF_01341">
    <property type="entry name" value="Ribosomal_uL15"/>
    <property type="match status" value="1"/>
</dbReference>
<dbReference type="InterPro" id="IPR030878">
    <property type="entry name" value="Ribosomal_uL15"/>
</dbReference>
<dbReference type="InterPro" id="IPR021131">
    <property type="entry name" value="Ribosomal_uL15/eL18"/>
</dbReference>
<dbReference type="InterPro" id="IPR036227">
    <property type="entry name" value="Ribosomal_uL15/eL18_sf"/>
</dbReference>
<dbReference type="InterPro" id="IPR005749">
    <property type="entry name" value="Ribosomal_uL15_bac-type"/>
</dbReference>
<dbReference type="InterPro" id="IPR001196">
    <property type="entry name" value="Ribosomal_uL15_CS"/>
</dbReference>
<dbReference type="NCBIfam" id="TIGR01071">
    <property type="entry name" value="rplO_bact"/>
    <property type="match status" value="1"/>
</dbReference>
<dbReference type="PANTHER" id="PTHR12934">
    <property type="entry name" value="50S RIBOSOMAL PROTEIN L15"/>
    <property type="match status" value="1"/>
</dbReference>
<dbReference type="PANTHER" id="PTHR12934:SF11">
    <property type="entry name" value="LARGE RIBOSOMAL SUBUNIT PROTEIN UL15M"/>
    <property type="match status" value="1"/>
</dbReference>
<dbReference type="Pfam" id="PF00828">
    <property type="entry name" value="Ribosomal_L27A"/>
    <property type="match status" value="1"/>
</dbReference>
<dbReference type="SUPFAM" id="SSF52080">
    <property type="entry name" value="Ribosomal proteins L15p and L18e"/>
    <property type="match status" value="1"/>
</dbReference>
<dbReference type="PROSITE" id="PS00475">
    <property type="entry name" value="RIBOSOMAL_L15"/>
    <property type="match status" value="1"/>
</dbReference>
<keyword id="KW-0687">Ribonucleoprotein</keyword>
<keyword id="KW-0689">Ribosomal protein</keyword>
<keyword id="KW-0694">RNA-binding</keyword>
<keyword id="KW-0699">rRNA-binding</keyword>
<reference key="1">
    <citation type="journal article" date="2007" name="PLoS Genet.">
        <title>Genome analysis of Minibacterium massiliensis highlights the convergent evolution of water-living bacteria.</title>
        <authorList>
            <person name="Audic S."/>
            <person name="Robert C."/>
            <person name="Campagna B."/>
            <person name="Parinello H."/>
            <person name="Claverie J.-M."/>
            <person name="Raoult D."/>
            <person name="Drancourt M."/>
        </authorList>
    </citation>
    <scope>NUCLEOTIDE SEQUENCE [LARGE SCALE GENOMIC DNA]</scope>
    <source>
        <strain>Marseille</strain>
    </source>
</reference>
<name>RL15_JANMA</name>
<gene>
    <name evidence="1" type="primary">rplO</name>
    <name type="ordered locus">mma_3392</name>
</gene>
<comment type="function">
    <text evidence="1">Binds to the 23S rRNA.</text>
</comment>
<comment type="subunit">
    <text evidence="1">Part of the 50S ribosomal subunit.</text>
</comment>
<comment type="similarity">
    <text evidence="1">Belongs to the universal ribosomal protein uL15 family.</text>
</comment>
<sequence>MELNSIQPADGAKHYKRRVGRGIGSGLGKTSGRGHKGQKSRSGGFHKVGFEGGQMPLQRRLPKRGFKSLATPYKAEVRLSDLEALPVTEIDILALKQAGVIGELARVVRVILSGSITKKVTVKGLIATKGAKAAIEAAGGSVA</sequence>
<evidence type="ECO:0000255" key="1">
    <source>
        <dbReference type="HAMAP-Rule" id="MF_01341"/>
    </source>
</evidence>
<evidence type="ECO:0000256" key="2">
    <source>
        <dbReference type="SAM" id="MobiDB-lite"/>
    </source>
</evidence>
<evidence type="ECO:0000305" key="3"/>
<accession>A6T3I5</accession>